<reference key="1">
    <citation type="journal article" date="2009" name="Genome Res.">
        <title>Comparative genomic analyses of the human fungal pathogens Coccidioides and their relatives.</title>
        <authorList>
            <person name="Sharpton T.J."/>
            <person name="Stajich J.E."/>
            <person name="Rounsley S.D."/>
            <person name="Gardner M.J."/>
            <person name="Wortman J.R."/>
            <person name="Jordar V.S."/>
            <person name="Maiti R."/>
            <person name="Kodira C.D."/>
            <person name="Neafsey D.E."/>
            <person name="Zeng Q."/>
            <person name="Hung C.-Y."/>
            <person name="McMahan C."/>
            <person name="Muszewska A."/>
            <person name="Grynberg M."/>
            <person name="Mandel M.A."/>
            <person name="Kellner E.M."/>
            <person name="Barker B.M."/>
            <person name="Galgiani J.N."/>
            <person name="Orbach M.J."/>
            <person name="Kirkland T.N."/>
            <person name="Cole G.T."/>
            <person name="Henn M.R."/>
            <person name="Birren B.W."/>
            <person name="Taylor J.W."/>
        </authorList>
    </citation>
    <scope>NUCLEOTIDE SEQUENCE [LARGE SCALE GENOMIC DNA]</scope>
    <source>
        <strain>RS</strain>
    </source>
</reference>
<reference key="2">
    <citation type="journal article" date="2010" name="Genome Res.">
        <title>Population genomic sequencing of Coccidioides fungi reveals recent hybridization and transposon control.</title>
        <authorList>
            <person name="Neafsey D.E."/>
            <person name="Barker B.M."/>
            <person name="Sharpton T.J."/>
            <person name="Stajich J.E."/>
            <person name="Park D.J."/>
            <person name="Whiston E."/>
            <person name="Hung C.-Y."/>
            <person name="McMahan C."/>
            <person name="White J."/>
            <person name="Sykes S."/>
            <person name="Heiman D."/>
            <person name="Young S."/>
            <person name="Zeng Q."/>
            <person name="Abouelleil A."/>
            <person name="Aftuck L."/>
            <person name="Bessette D."/>
            <person name="Brown A."/>
            <person name="FitzGerald M."/>
            <person name="Lui A."/>
            <person name="Macdonald J.P."/>
            <person name="Priest M."/>
            <person name="Orbach M.J."/>
            <person name="Galgiani J.N."/>
            <person name="Kirkland T.N."/>
            <person name="Cole G.T."/>
            <person name="Birren B.W."/>
            <person name="Henn M.R."/>
            <person name="Taylor J.W."/>
            <person name="Rounsley S.D."/>
        </authorList>
    </citation>
    <scope>GENOME REANNOTATION</scope>
    <source>
        <strain>RS</strain>
    </source>
</reference>
<name>DRS1_COCIM</name>
<dbReference type="EC" id="3.6.4.13"/>
<dbReference type="EMBL" id="GG704916">
    <property type="protein sequence ID" value="EAS32277.3"/>
    <property type="molecule type" value="Genomic_DNA"/>
</dbReference>
<dbReference type="RefSeq" id="XP_001243860.1">
    <property type="nucleotide sequence ID" value="XM_001243859.1"/>
</dbReference>
<dbReference type="SMR" id="Q1E2B2"/>
<dbReference type="FunCoup" id="Q1E2B2">
    <property type="interactions" value="853"/>
</dbReference>
<dbReference type="STRING" id="246410.Q1E2B2"/>
<dbReference type="GeneID" id="4563096"/>
<dbReference type="KEGG" id="cim:CIMG_03301"/>
<dbReference type="VEuPathDB" id="FungiDB:CIMG_03301"/>
<dbReference type="InParanoid" id="Q1E2B2"/>
<dbReference type="OMA" id="MIDPPKQ"/>
<dbReference type="OrthoDB" id="10259843at2759"/>
<dbReference type="Proteomes" id="UP000001261">
    <property type="component" value="Unassembled WGS sequence"/>
</dbReference>
<dbReference type="GO" id="GO:0005829">
    <property type="term" value="C:cytosol"/>
    <property type="evidence" value="ECO:0007669"/>
    <property type="project" value="TreeGrafter"/>
</dbReference>
<dbReference type="GO" id="GO:0005730">
    <property type="term" value="C:nucleolus"/>
    <property type="evidence" value="ECO:0007669"/>
    <property type="project" value="UniProtKB-SubCell"/>
</dbReference>
<dbReference type="GO" id="GO:0005524">
    <property type="term" value="F:ATP binding"/>
    <property type="evidence" value="ECO:0007669"/>
    <property type="project" value="UniProtKB-KW"/>
</dbReference>
<dbReference type="GO" id="GO:0016887">
    <property type="term" value="F:ATP hydrolysis activity"/>
    <property type="evidence" value="ECO:0007669"/>
    <property type="project" value="RHEA"/>
</dbReference>
<dbReference type="GO" id="GO:0003723">
    <property type="term" value="F:RNA binding"/>
    <property type="evidence" value="ECO:0007669"/>
    <property type="project" value="UniProtKB-KW"/>
</dbReference>
<dbReference type="GO" id="GO:0003724">
    <property type="term" value="F:RNA helicase activity"/>
    <property type="evidence" value="ECO:0007669"/>
    <property type="project" value="UniProtKB-EC"/>
</dbReference>
<dbReference type="GO" id="GO:0010467">
    <property type="term" value="P:gene expression"/>
    <property type="evidence" value="ECO:0007669"/>
    <property type="project" value="UniProtKB-ARBA"/>
</dbReference>
<dbReference type="GO" id="GO:0042254">
    <property type="term" value="P:ribosome biogenesis"/>
    <property type="evidence" value="ECO:0007669"/>
    <property type="project" value="UniProtKB-KW"/>
</dbReference>
<dbReference type="CDD" id="cd17947">
    <property type="entry name" value="DEADc_DDX27"/>
    <property type="match status" value="1"/>
</dbReference>
<dbReference type="CDD" id="cd18787">
    <property type="entry name" value="SF2_C_DEAD"/>
    <property type="match status" value="1"/>
</dbReference>
<dbReference type="Gene3D" id="3.40.50.300">
    <property type="entry name" value="P-loop containing nucleotide triphosphate hydrolases"/>
    <property type="match status" value="2"/>
</dbReference>
<dbReference type="InterPro" id="IPR011545">
    <property type="entry name" value="DEAD/DEAH_box_helicase_dom"/>
</dbReference>
<dbReference type="InterPro" id="IPR050079">
    <property type="entry name" value="DEAD_box_RNA_helicase"/>
</dbReference>
<dbReference type="InterPro" id="IPR014001">
    <property type="entry name" value="Helicase_ATP-bd"/>
</dbReference>
<dbReference type="InterPro" id="IPR001650">
    <property type="entry name" value="Helicase_C-like"/>
</dbReference>
<dbReference type="InterPro" id="IPR027417">
    <property type="entry name" value="P-loop_NTPase"/>
</dbReference>
<dbReference type="InterPro" id="IPR000629">
    <property type="entry name" value="RNA-helicase_DEAD-box_CS"/>
</dbReference>
<dbReference type="InterPro" id="IPR014014">
    <property type="entry name" value="RNA_helicase_DEAD_Q_motif"/>
</dbReference>
<dbReference type="PANTHER" id="PTHR47959:SF1">
    <property type="entry name" value="ATP-DEPENDENT RNA HELICASE DBPA"/>
    <property type="match status" value="1"/>
</dbReference>
<dbReference type="PANTHER" id="PTHR47959">
    <property type="entry name" value="ATP-DEPENDENT RNA HELICASE RHLE-RELATED"/>
    <property type="match status" value="1"/>
</dbReference>
<dbReference type="Pfam" id="PF00270">
    <property type="entry name" value="DEAD"/>
    <property type="match status" value="1"/>
</dbReference>
<dbReference type="Pfam" id="PF00271">
    <property type="entry name" value="Helicase_C"/>
    <property type="match status" value="1"/>
</dbReference>
<dbReference type="SMART" id="SM00487">
    <property type="entry name" value="DEXDc"/>
    <property type="match status" value="1"/>
</dbReference>
<dbReference type="SMART" id="SM00490">
    <property type="entry name" value="HELICc"/>
    <property type="match status" value="1"/>
</dbReference>
<dbReference type="SUPFAM" id="SSF52540">
    <property type="entry name" value="P-loop containing nucleoside triphosphate hydrolases"/>
    <property type="match status" value="2"/>
</dbReference>
<dbReference type="PROSITE" id="PS00039">
    <property type="entry name" value="DEAD_ATP_HELICASE"/>
    <property type="match status" value="1"/>
</dbReference>
<dbReference type="PROSITE" id="PS51192">
    <property type="entry name" value="HELICASE_ATP_BIND_1"/>
    <property type="match status" value="1"/>
</dbReference>
<dbReference type="PROSITE" id="PS51194">
    <property type="entry name" value="HELICASE_CTER"/>
    <property type="match status" value="1"/>
</dbReference>
<dbReference type="PROSITE" id="PS51195">
    <property type="entry name" value="Q_MOTIF"/>
    <property type="match status" value="1"/>
</dbReference>
<sequence>MAGKRKARDEEFIFTLSDEETPYINGGDFDEEDDDVAPSINKSKNTKTLKSRVEPSSKKRRNEESTTGHQNKKLKQQEQGQQKGLKGKRAIANGWDAENDSNGSGEDEEEEEDEEGEEGLLDSDFEFDIGGATNIGLVEEFDGWGAEDRDKQGNMGEAKKGVDLDEILCRRRQKKLESQEKKTREAAKSNVDDSFEGLSDDDGHNEDENEDNEMPNFDDDELLAPDAFGMGAEGESDEQGKANADKGSDDESMPDANGADEEDASDSDSVASPVAHPDDLRSDESSDSEEEDPEEVAKRNAFFAPEENPTKSEETSSNSTFQNFNLSRPILRGLAAVGFSAPTPIQRKAIPVGLLGKDLVGGAVTGSGKTAAFIIPILERLLYRPRKVPTSRVAILMPTRELAVQCYNVATKLATYTDITFCQLVGGFSLREQENVLKQRPDVIIATPGRFIDHMRNSASFTVDTLEILVLDEADRMLEDGFADELNEILNTIPKSRQTMLFSATMTDSVDKLIRVGLNRPVRLMVDSKKHTVGTLVQEFVRLRPGREGKRMGYLVLLCNTIYTNRVIVFFRQKKEAHRARIIFGLLGLKAAELHGSMSQEQRINAVEAFRDGKVPFLLATDLASRGLDIKGVESVINYEAPQSHEIYLHRVGRTARAGRSGRACTIAAEPDRKVVKAAVKAGRAQGAKIVSRVVDPAVADEWASKVEEMQAEIEDILKEEKEEKQLAQAEMQVKRGQNLIKHGSEIMARPKRTWFETEREKREAKKRALSELNGPDSVIKKEKRKLSGKEKKKLDDNRLREEGKIWKKGKKERESKGDMRSQGKGKAKKDKVKAKKAAR</sequence>
<evidence type="ECO:0000250" key="1"/>
<evidence type="ECO:0000255" key="2">
    <source>
        <dbReference type="PROSITE-ProRule" id="PRU00541"/>
    </source>
</evidence>
<evidence type="ECO:0000255" key="3">
    <source>
        <dbReference type="PROSITE-ProRule" id="PRU00542"/>
    </source>
</evidence>
<evidence type="ECO:0000256" key="4">
    <source>
        <dbReference type="SAM" id="MobiDB-lite"/>
    </source>
</evidence>
<evidence type="ECO:0000305" key="5"/>
<feature type="chain" id="PRO_0000256022" description="ATP-dependent RNA helicase DRS1">
    <location>
        <begin position="1"/>
        <end position="840"/>
    </location>
</feature>
<feature type="domain" description="Helicase ATP-binding" evidence="2">
    <location>
        <begin position="350"/>
        <end position="524"/>
    </location>
</feature>
<feature type="domain" description="Helicase C-terminal" evidence="3">
    <location>
        <begin position="554"/>
        <end position="733"/>
    </location>
</feature>
<feature type="region of interest" description="Disordered" evidence="4">
    <location>
        <begin position="1"/>
        <end position="133"/>
    </location>
</feature>
<feature type="region of interest" description="Disordered" evidence="4">
    <location>
        <begin position="146"/>
        <end position="321"/>
    </location>
</feature>
<feature type="region of interest" description="Disordered" evidence="4">
    <location>
        <begin position="766"/>
        <end position="840"/>
    </location>
</feature>
<feature type="short sequence motif" description="Q motif">
    <location>
        <begin position="319"/>
        <end position="347"/>
    </location>
</feature>
<feature type="short sequence motif" description="DEAD box">
    <location>
        <begin position="472"/>
        <end position="475"/>
    </location>
</feature>
<feature type="compositionally biased region" description="Basic and acidic residues" evidence="4">
    <location>
        <begin position="51"/>
        <end position="66"/>
    </location>
</feature>
<feature type="compositionally biased region" description="Acidic residues" evidence="4">
    <location>
        <begin position="105"/>
        <end position="127"/>
    </location>
</feature>
<feature type="compositionally biased region" description="Basic and acidic residues" evidence="4">
    <location>
        <begin position="146"/>
        <end position="191"/>
    </location>
</feature>
<feature type="compositionally biased region" description="Acidic residues" evidence="4">
    <location>
        <begin position="193"/>
        <end position="223"/>
    </location>
</feature>
<feature type="compositionally biased region" description="Basic and acidic residues" evidence="4">
    <location>
        <begin position="238"/>
        <end position="249"/>
    </location>
</feature>
<feature type="compositionally biased region" description="Acidic residues" evidence="4">
    <location>
        <begin position="250"/>
        <end position="266"/>
    </location>
</feature>
<feature type="compositionally biased region" description="Acidic residues" evidence="4">
    <location>
        <begin position="285"/>
        <end position="294"/>
    </location>
</feature>
<feature type="compositionally biased region" description="Basic and acidic residues" evidence="4">
    <location>
        <begin position="786"/>
        <end position="822"/>
    </location>
</feature>
<feature type="compositionally biased region" description="Basic residues" evidence="4">
    <location>
        <begin position="824"/>
        <end position="840"/>
    </location>
</feature>
<feature type="binding site" evidence="2">
    <location>
        <begin position="363"/>
        <end position="370"/>
    </location>
    <ligand>
        <name>ATP</name>
        <dbReference type="ChEBI" id="CHEBI:30616"/>
    </ligand>
</feature>
<gene>
    <name type="primary">DRS1</name>
    <name type="ORF">CIMG_03301</name>
</gene>
<comment type="function">
    <text evidence="1">ATP-binding RNA helicase involved in ribosome assembly.</text>
</comment>
<comment type="catalytic activity">
    <reaction>
        <text>ATP + H2O = ADP + phosphate + H(+)</text>
        <dbReference type="Rhea" id="RHEA:13065"/>
        <dbReference type="ChEBI" id="CHEBI:15377"/>
        <dbReference type="ChEBI" id="CHEBI:15378"/>
        <dbReference type="ChEBI" id="CHEBI:30616"/>
        <dbReference type="ChEBI" id="CHEBI:43474"/>
        <dbReference type="ChEBI" id="CHEBI:456216"/>
        <dbReference type="EC" id="3.6.4.13"/>
    </reaction>
</comment>
<comment type="subunit">
    <text evidence="1">Associates with pre-ribosomal particles.</text>
</comment>
<comment type="subcellular location">
    <subcellularLocation>
        <location evidence="1">Nucleus</location>
        <location evidence="1">Nucleolus</location>
    </subcellularLocation>
</comment>
<comment type="domain">
    <text>The Q motif is unique to and characteristic of the DEAD box family of RNA helicases and controls ATP binding and hydrolysis.</text>
</comment>
<comment type="similarity">
    <text evidence="5">Belongs to the DEAD box helicase family. DDX27/DRS1 subfamily.</text>
</comment>
<protein>
    <recommendedName>
        <fullName>ATP-dependent RNA helicase DRS1</fullName>
        <ecNumber>3.6.4.13</ecNumber>
    </recommendedName>
</protein>
<organism>
    <name type="scientific">Coccidioides immitis (strain RS)</name>
    <name type="common">Valley fever fungus</name>
    <dbReference type="NCBI Taxonomy" id="246410"/>
    <lineage>
        <taxon>Eukaryota</taxon>
        <taxon>Fungi</taxon>
        <taxon>Dikarya</taxon>
        <taxon>Ascomycota</taxon>
        <taxon>Pezizomycotina</taxon>
        <taxon>Eurotiomycetes</taxon>
        <taxon>Eurotiomycetidae</taxon>
        <taxon>Onygenales</taxon>
        <taxon>Onygenaceae</taxon>
        <taxon>Coccidioides</taxon>
    </lineage>
</organism>
<keyword id="KW-0067">ATP-binding</keyword>
<keyword id="KW-0347">Helicase</keyword>
<keyword id="KW-0378">Hydrolase</keyword>
<keyword id="KW-0547">Nucleotide-binding</keyword>
<keyword id="KW-0539">Nucleus</keyword>
<keyword id="KW-1185">Reference proteome</keyword>
<keyword id="KW-0690">Ribosome biogenesis</keyword>
<keyword id="KW-0694">RNA-binding</keyword>
<accession>Q1E2B2</accession>
<accession>J3KBA7</accession>
<proteinExistence type="inferred from homology"/>